<name>THIG_THEVB</name>
<proteinExistence type="inferred from homology"/>
<gene>
    <name evidence="1" type="primary">thiG</name>
    <name type="ordered locus">tll0065</name>
</gene>
<evidence type="ECO:0000255" key="1">
    <source>
        <dbReference type="HAMAP-Rule" id="MF_00443"/>
    </source>
</evidence>
<dbReference type="EC" id="2.8.1.10" evidence="1"/>
<dbReference type="EMBL" id="BA000039">
    <property type="protein sequence ID" value="BAC07618.1"/>
    <property type="molecule type" value="Genomic_DNA"/>
</dbReference>
<dbReference type="RefSeq" id="NP_680856.1">
    <property type="nucleotide sequence ID" value="NC_004113.1"/>
</dbReference>
<dbReference type="RefSeq" id="WP_011055920.1">
    <property type="nucleotide sequence ID" value="NC_004113.1"/>
</dbReference>
<dbReference type="SMR" id="Q8DMP6"/>
<dbReference type="STRING" id="197221.gene:10746643"/>
<dbReference type="EnsemblBacteria" id="BAC07618">
    <property type="protein sequence ID" value="BAC07618"/>
    <property type="gene ID" value="BAC07618"/>
</dbReference>
<dbReference type="KEGG" id="tel:tll0065"/>
<dbReference type="PATRIC" id="fig|197221.4.peg.66"/>
<dbReference type="eggNOG" id="COG2022">
    <property type="taxonomic scope" value="Bacteria"/>
</dbReference>
<dbReference type="UniPathway" id="UPA00060"/>
<dbReference type="Proteomes" id="UP000000440">
    <property type="component" value="Chromosome"/>
</dbReference>
<dbReference type="GO" id="GO:0005737">
    <property type="term" value="C:cytoplasm"/>
    <property type="evidence" value="ECO:0007669"/>
    <property type="project" value="UniProtKB-SubCell"/>
</dbReference>
<dbReference type="GO" id="GO:1990107">
    <property type="term" value="F:thiazole synthase activity"/>
    <property type="evidence" value="ECO:0007669"/>
    <property type="project" value="UniProtKB-EC"/>
</dbReference>
<dbReference type="GO" id="GO:0009229">
    <property type="term" value="P:thiamine diphosphate biosynthetic process"/>
    <property type="evidence" value="ECO:0007669"/>
    <property type="project" value="UniProtKB-UniRule"/>
</dbReference>
<dbReference type="CDD" id="cd04728">
    <property type="entry name" value="ThiG"/>
    <property type="match status" value="1"/>
</dbReference>
<dbReference type="Gene3D" id="3.20.20.70">
    <property type="entry name" value="Aldolase class I"/>
    <property type="match status" value="1"/>
</dbReference>
<dbReference type="HAMAP" id="MF_00443">
    <property type="entry name" value="ThiG"/>
    <property type="match status" value="1"/>
</dbReference>
<dbReference type="InterPro" id="IPR013785">
    <property type="entry name" value="Aldolase_TIM"/>
</dbReference>
<dbReference type="InterPro" id="IPR033983">
    <property type="entry name" value="Thiazole_synthase_ThiG"/>
</dbReference>
<dbReference type="InterPro" id="IPR008867">
    <property type="entry name" value="ThiG"/>
</dbReference>
<dbReference type="PANTHER" id="PTHR34266">
    <property type="entry name" value="THIAZOLE SYNTHASE"/>
    <property type="match status" value="1"/>
</dbReference>
<dbReference type="PANTHER" id="PTHR34266:SF2">
    <property type="entry name" value="THIAZOLE SYNTHASE"/>
    <property type="match status" value="1"/>
</dbReference>
<dbReference type="Pfam" id="PF05690">
    <property type="entry name" value="ThiG"/>
    <property type="match status" value="1"/>
</dbReference>
<dbReference type="SUPFAM" id="SSF110399">
    <property type="entry name" value="ThiG-like"/>
    <property type="match status" value="1"/>
</dbReference>
<organism>
    <name type="scientific">Thermosynechococcus vestitus (strain NIES-2133 / IAM M-273 / BP-1)</name>
    <dbReference type="NCBI Taxonomy" id="197221"/>
    <lineage>
        <taxon>Bacteria</taxon>
        <taxon>Bacillati</taxon>
        <taxon>Cyanobacteriota</taxon>
        <taxon>Cyanophyceae</taxon>
        <taxon>Acaryochloridales</taxon>
        <taxon>Thermosynechococcaceae</taxon>
        <taxon>Thermosynechococcus</taxon>
    </lineage>
</organism>
<protein>
    <recommendedName>
        <fullName evidence="1">Thiazole synthase</fullName>
        <ecNumber evidence="1">2.8.1.10</ecNumber>
    </recommendedName>
</protein>
<sequence>MVSAPPAEQLIEDAPLTIAGRQFRSRLMTGTGKYRSIADLQASVAASGCEIVTVAVRRVQTNAPGHEGLVDALDWSKLWLLPNTAGCQTAEEAIRVARLGREMAKLLGQEDNNFVKLEVIPDPKYLLPDPFGTLAAAEQLVKEGFAVLPYINADPLLAKRLEEVGCVTVMPLASPIGSGQGLRNAANIQIIIEQASVPVVVDAGIGTPSEAAAAMELGADALLINTAIAEAGNAPAMAKAMALATTAGRLAYLAGRIPVKAYASASSPLSGTITARS</sequence>
<feature type="chain" id="PRO_0000162864" description="Thiazole synthase">
    <location>
        <begin position="1"/>
        <end position="277"/>
    </location>
</feature>
<feature type="active site" description="Schiff-base intermediate with DXP" evidence="1">
    <location>
        <position position="116"/>
    </location>
</feature>
<feature type="binding site" evidence="1">
    <location>
        <position position="177"/>
    </location>
    <ligand>
        <name>1-deoxy-D-xylulose 5-phosphate</name>
        <dbReference type="ChEBI" id="CHEBI:57792"/>
    </ligand>
</feature>
<feature type="binding site" evidence="1">
    <location>
        <begin position="203"/>
        <end position="204"/>
    </location>
    <ligand>
        <name>1-deoxy-D-xylulose 5-phosphate</name>
        <dbReference type="ChEBI" id="CHEBI:57792"/>
    </ligand>
</feature>
<feature type="binding site" evidence="1">
    <location>
        <begin position="225"/>
        <end position="226"/>
    </location>
    <ligand>
        <name>1-deoxy-D-xylulose 5-phosphate</name>
        <dbReference type="ChEBI" id="CHEBI:57792"/>
    </ligand>
</feature>
<comment type="function">
    <text evidence="1">Catalyzes the rearrangement of 1-deoxy-D-xylulose 5-phosphate (DXP) to produce the thiazole phosphate moiety of thiamine. Sulfur is provided by the thiocarboxylate moiety of the carrier protein ThiS. In vitro, sulfur can be provided by H(2)S.</text>
</comment>
<comment type="catalytic activity">
    <reaction evidence="1">
        <text>[ThiS sulfur-carrier protein]-C-terminal-Gly-aminoethanethioate + 2-iminoacetate + 1-deoxy-D-xylulose 5-phosphate = [ThiS sulfur-carrier protein]-C-terminal Gly-Gly + 2-[(2R,5Z)-2-carboxy-4-methylthiazol-5(2H)-ylidene]ethyl phosphate + 2 H2O + H(+)</text>
        <dbReference type="Rhea" id="RHEA:26297"/>
        <dbReference type="Rhea" id="RHEA-COMP:12909"/>
        <dbReference type="Rhea" id="RHEA-COMP:19908"/>
        <dbReference type="ChEBI" id="CHEBI:15377"/>
        <dbReference type="ChEBI" id="CHEBI:15378"/>
        <dbReference type="ChEBI" id="CHEBI:57792"/>
        <dbReference type="ChEBI" id="CHEBI:62899"/>
        <dbReference type="ChEBI" id="CHEBI:77846"/>
        <dbReference type="ChEBI" id="CHEBI:90778"/>
        <dbReference type="ChEBI" id="CHEBI:232372"/>
        <dbReference type="EC" id="2.8.1.10"/>
    </reaction>
</comment>
<comment type="pathway">
    <text evidence="1">Cofactor biosynthesis; thiamine diphosphate biosynthesis.</text>
</comment>
<comment type="subunit">
    <text evidence="1">Homotetramer. Forms heterodimers with either ThiH or ThiS.</text>
</comment>
<comment type="subcellular location">
    <subcellularLocation>
        <location evidence="1">Cytoplasm</location>
    </subcellularLocation>
</comment>
<comment type="similarity">
    <text evidence="1">Belongs to the ThiG family.</text>
</comment>
<keyword id="KW-0963">Cytoplasm</keyword>
<keyword id="KW-1185">Reference proteome</keyword>
<keyword id="KW-0704">Schiff base</keyword>
<keyword id="KW-0784">Thiamine biosynthesis</keyword>
<keyword id="KW-0808">Transferase</keyword>
<accession>Q8DMP6</accession>
<reference key="1">
    <citation type="journal article" date="2002" name="DNA Res.">
        <title>Complete genome structure of the thermophilic cyanobacterium Thermosynechococcus elongatus BP-1.</title>
        <authorList>
            <person name="Nakamura Y."/>
            <person name="Kaneko T."/>
            <person name="Sato S."/>
            <person name="Ikeuchi M."/>
            <person name="Katoh H."/>
            <person name="Sasamoto S."/>
            <person name="Watanabe A."/>
            <person name="Iriguchi M."/>
            <person name="Kawashima K."/>
            <person name="Kimura T."/>
            <person name="Kishida Y."/>
            <person name="Kiyokawa C."/>
            <person name="Kohara M."/>
            <person name="Matsumoto M."/>
            <person name="Matsuno A."/>
            <person name="Nakazaki N."/>
            <person name="Shimpo S."/>
            <person name="Sugimoto M."/>
            <person name="Takeuchi C."/>
            <person name="Yamada M."/>
            <person name="Tabata S."/>
        </authorList>
    </citation>
    <scope>NUCLEOTIDE SEQUENCE [LARGE SCALE GENOMIC DNA]</scope>
    <source>
        <strain>NIES-2133 / IAM M-273 / BP-1</strain>
    </source>
</reference>